<sequence>MALSFVSSTRFSKMQYGIWHSGSFTQRVSVRCCEIANEAPRPKSKLQVGSPIIIVEAPKVIKTAASMPCLRANSGLVKPGDVGRIVSRKPKDLWAVRLSIGTYLLDGKYFKALELDEGDSD</sequence>
<accession>F4K6X0</accession>
<accession>Q8L8M4</accession>
<protein>
    <recommendedName>
        <fullName evidence="3">Protein CHLORORESPIRATORY REDUCTION 42, chloroplastic</fullName>
    </recommendedName>
</protein>
<organism>
    <name type="scientific">Arabidopsis thaliana</name>
    <name type="common">Mouse-ear cress</name>
    <dbReference type="NCBI Taxonomy" id="3702"/>
    <lineage>
        <taxon>Eukaryota</taxon>
        <taxon>Viridiplantae</taxon>
        <taxon>Streptophyta</taxon>
        <taxon>Embryophyta</taxon>
        <taxon>Tracheophyta</taxon>
        <taxon>Spermatophyta</taxon>
        <taxon>Magnoliopsida</taxon>
        <taxon>eudicotyledons</taxon>
        <taxon>Gunneridae</taxon>
        <taxon>Pentapetalae</taxon>
        <taxon>rosids</taxon>
        <taxon>malvids</taxon>
        <taxon>Brassicales</taxon>
        <taxon>Brassicaceae</taxon>
        <taxon>Camelineae</taxon>
        <taxon>Arabidopsis</taxon>
    </lineage>
</organism>
<proteinExistence type="evidence at protein level"/>
<feature type="transit peptide" description="Chloroplast" evidence="1">
    <location>
        <begin position="1"/>
        <end status="unknown"/>
    </location>
</feature>
<feature type="chain" id="PRO_0000454913" description="Protein CHLORORESPIRATORY REDUCTION 42, chloroplastic">
    <location>
        <begin status="unknown"/>
        <end position="121"/>
    </location>
</feature>
<reference key="1">
    <citation type="journal article" date="2000" name="Nature">
        <title>Sequence and analysis of chromosome 5 of the plant Arabidopsis thaliana.</title>
        <authorList>
            <person name="Tabata S."/>
            <person name="Kaneko T."/>
            <person name="Nakamura Y."/>
            <person name="Kotani H."/>
            <person name="Kato T."/>
            <person name="Asamizu E."/>
            <person name="Miyajima N."/>
            <person name="Sasamoto S."/>
            <person name="Kimura T."/>
            <person name="Hosouchi T."/>
            <person name="Kawashima K."/>
            <person name="Kohara M."/>
            <person name="Matsumoto M."/>
            <person name="Matsuno A."/>
            <person name="Muraki A."/>
            <person name="Nakayama S."/>
            <person name="Nakazaki N."/>
            <person name="Naruo K."/>
            <person name="Okumura S."/>
            <person name="Shinpo S."/>
            <person name="Takeuchi C."/>
            <person name="Wada T."/>
            <person name="Watanabe A."/>
            <person name="Yamada M."/>
            <person name="Yasuda M."/>
            <person name="Sato S."/>
            <person name="de la Bastide M."/>
            <person name="Huang E."/>
            <person name="Spiegel L."/>
            <person name="Gnoj L."/>
            <person name="O'Shaughnessy A."/>
            <person name="Preston R."/>
            <person name="Habermann K."/>
            <person name="Murray J."/>
            <person name="Johnson D."/>
            <person name="Rohlfing T."/>
            <person name="Nelson J."/>
            <person name="Stoneking T."/>
            <person name="Pepin K."/>
            <person name="Spieth J."/>
            <person name="Sekhon M."/>
            <person name="Armstrong J."/>
            <person name="Becker M."/>
            <person name="Belter E."/>
            <person name="Cordum H."/>
            <person name="Cordes M."/>
            <person name="Courtney L."/>
            <person name="Courtney W."/>
            <person name="Dante M."/>
            <person name="Du H."/>
            <person name="Edwards J."/>
            <person name="Fryman J."/>
            <person name="Haakensen B."/>
            <person name="Lamar E."/>
            <person name="Latreille P."/>
            <person name="Leonard S."/>
            <person name="Meyer R."/>
            <person name="Mulvaney E."/>
            <person name="Ozersky P."/>
            <person name="Riley A."/>
            <person name="Strowmatt C."/>
            <person name="Wagner-McPherson C."/>
            <person name="Wollam A."/>
            <person name="Yoakum M."/>
            <person name="Bell M."/>
            <person name="Dedhia N."/>
            <person name="Parnell L."/>
            <person name="Shah R."/>
            <person name="Rodriguez M."/>
            <person name="Hoon See L."/>
            <person name="Vil D."/>
            <person name="Baker J."/>
            <person name="Kirchoff K."/>
            <person name="Toth K."/>
            <person name="King L."/>
            <person name="Bahret A."/>
            <person name="Miller B."/>
            <person name="Marra M.A."/>
            <person name="Martienssen R."/>
            <person name="McCombie W.R."/>
            <person name="Wilson R.K."/>
            <person name="Murphy G."/>
            <person name="Bancroft I."/>
            <person name="Volckaert G."/>
            <person name="Wambutt R."/>
            <person name="Duesterhoeft A."/>
            <person name="Stiekema W."/>
            <person name="Pohl T."/>
            <person name="Entian K.-D."/>
            <person name="Terryn N."/>
            <person name="Hartley N."/>
            <person name="Bent E."/>
            <person name="Johnson S."/>
            <person name="Langham S.-A."/>
            <person name="McCullagh B."/>
            <person name="Robben J."/>
            <person name="Grymonprez B."/>
            <person name="Zimmermann W."/>
            <person name="Ramsperger U."/>
            <person name="Wedler H."/>
            <person name="Balke K."/>
            <person name="Wedler E."/>
            <person name="Peters S."/>
            <person name="van Staveren M."/>
            <person name="Dirkse W."/>
            <person name="Mooijman P."/>
            <person name="Klein Lankhorst R."/>
            <person name="Weitzenegger T."/>
            <person name="Bothe G."/>
            <person name="Rose M."/>
            <person name="Hauf J."/>
            <person name="Berneiser S."/>
            <person name="Hempel S."/>
            <person name="Feldpausch M."/>
            <person name="Lamberth S."/>
            <person name="Villarroel R."/>
            <person name="Gielen J."/>
            <person name="Ardiles W."/>
            <person name="Bents O."/>
            <person name="Lemcke K."/>
            <person name="Kolesov G."/>
            <person name="Mayer K.F.X."/>
            <person name="Rudd S."/>
            <person name="Schoof H."/>
            <person name="Schueller C."/>
            <person name="Zaccaria P."/>
            <person name="Mewes H.-W."/>
            <person name="Bevan M."/>
            <person name="Fransz P.F."/>
        </authorList>
    </citation>
    <scope>NUCLEOTIDE SEQUENCE [LARGE SCALE GENOMIC DNA]</scope>
    <source>
        <strain>cv. Columbia</strain>
    </source>
</reference>
<reference key="2">
    <citation type="journal article" date="2017" name="Plant J.">
        <title>Araport11: a complete reannotation of the Arabidopsis thaliana reference genome.</title>
        <authorList>
            <person name="Cheng C.Y."/>
            <person name="Krishnakumar V."/>
            <person name="Chan A.P."/>
            <person name="Thibaud-Nissen F."/>
            <person name="Schobel S."/>
            <person name="Town C.D."/>
        </authorList>
    </citation>
    <scope>GENOME REANNOTATION</scope>
    <source>
        <strain>cv. Columbia</strain>
    </source>
</reference>
<reference key="3">
    <citation type="submission" date="2006-02" db="EMBL/GenBank/DDBJ databases">
        <title>Arabidopsis ORF clones.</title>
        <authorList>
            <person name="Shinn P."/>
            <person name="Chen H."/>
            <person name="Kim C.J."/>
            <person name="Ecker J.R."/>
        </authorList>
    </citation>
    <scope>NUCLEOTIDE SEQUENCE [LARGE SCALE MRNA] OF 9-121</scope>
    <source>
        <strain>cv. Columbia</strain>
    </source>
</reference>
<reference key="4">
    <citation type="submission" date="2002-03" db="EMBL/GenBank/DDBJ databases">
        <title>Full-length cDNA from Arabidopsis thaliana.</title>
        <authorList>
            <person name="Brover V.V."/>
            <person name="Troukhan M.E."/>
            <person name="Alexandrov N.A."/>
            <person name="Lu Y.-P."/>
            <person name="Flavell R.B."/>
            <person name="Feldmann K.A."/>
        </authorList>
    </citation>
    <scope>NUCLEOTIDE SEQUENCE [LARGE SCALE MRNA] OF 14-121</scope>
</reference>
<reference key="5">
    <citation type="journal article" date="2012" name="Plant Cell">
        <title>Multistep assembly of chloroplast NADH dehydrogenase-like subcomplex A requires several nucleus-encoded proteins, including CRR41 and CRR42, in Arabidopsis.</title>
        <authorList>
            <person name="Peng L."/>
            <person name="Fukao Y."/>
            <person name="Fujiwara M."/>
            <person name="Shikanai T."/>
        </authorList>
    </citation>
    <scope>FUNCTION</scope>
    <scope>DISRUPTION PHENOTYPE</scope>
    <scope>SUBUNIT</scope>
    <scope>SUBCELLULAR LOCATION</scope>
</reference>
<evidence type="ECO:0000255" key="1"/>
<evidence type="ECO:0000269" key="2">
    <source>
    </source>
</evidence>
<evidence type="ECO:0000303" key="3">
    <source>
    </source>
</evidence>
<evidence type="ECO:0000305" key="4"/>
<evidence type="ECO:0000312" key="5">
    <source>
        <dbReference type="Araport" id="AT5G20935"/>
    </source>
</evidence>
<evidence type="ECO:0000312" key="6">
    <source>
        <dbReference type="EMBL" id="AF296834"/>
    </source>
</evidence>
<comment type="function">
    <text evidence="2">Required for both formation and activity of the chloroplast NAD(P)H dehydrogenase (NDH) complex of the photosynthetic electron transport chain (PubMed:22274627). Functions in assembly or stabilization of the NDH complex; probably involved, together with CRR1 and CRR6, in the incorporation of NdhJ, NdhM, NdhK and NdhI into the NDH subcomplex A assembly intermediate (NAI500) to produce the complex NAI400 (PubMed:22274627).</text>
</comment>
<comment type="subunit">
    <text evidence="2">Biogenesis factor component of the plastidial NDH subcomplex A.</text>
</comment>
<comment type="subcellular location">
    <subcellularLocation>
        <location evidence="1">Plastid</location>
        <location evidence="1">Chloroplast</location>
    </subcellularLocation>
    <subcellularLocation>
        <location evidence="2">Plastid</location>
        <location evidence="2">Chloroplast stroma</location>
    </subcellularLocation>
</comment>
<comment type="disruption phenotype">
    <text evidence="2">Specifically defective in the accumulation of subcomplex A, a stroma-protruding arm of the chloroplast NADH dehydrogenase-like complex (NDH).</text>
</comment>
<comment type="sequence caution" evidence="4">
    <conflict type="erroneous initiation">
        <sequence resource="EMBL-CDS" id="ABD38900"/>
    </conflict>
    <text>Truncated N-terminus.</text>
</comment>
<keyword id="KW-0150">Chloroplast</keyword>
<keyword id="KW-0934">Plastid</keyword>
<keyword id="KW-1185">Reference proteome</keyword>
<keyword id="KW-0809">Transit peptide</keyword>
<dbReference type="EMBL" id="AF296834">
    <property type="status" value="NOT_ANNOTATED_CDS"/>
    <property type="molecule type" value="Genomic_DNA"/>
</dbReference>
<dbReference type="EMBL" id="CP002688">
    <property type="protein sequence ID" value="AED92908.2"/>
    <property type="molecule type" value="Genomic_DNA"/>
</dbReference>
<dbReference type="EMBL" id="BT024561">
    <property type="protein sequence ID" value="ABD38900.1"/>
    <property type="status" value="ALT_INIT"/>
    <property type="molecule type" value="mRNA"/>
</dbReference>
<dbReference type="EMBL" id="AY088909">
    <property type="protein sequence ID" value="AAM67215.1"/>
    <property type="molecule type" value="mRNA"/>
</dbReference>
<dbReference type="RefSeq" id="NP_568406.2">
    <property type="nucleotide sequence ID" value="NM_122102.3"/>
</dbReference>
<dbReference type="SMR" id="F4K6X0"/>
<dbReference type="FunCoup" id="F4K6X0">
    <property type="interactions" value="824"/>
</dbReference>
<dbReference type="STRING" id="3702.F4K6X0"/>
<dbReference type="iPTMnet" id="F4K6X0"/>
<dbReference type="PaxDb" id="3702-AT5G20935.1"/>
<dbReference type="ProteomicsDB" id="210328"/>
<dbReference type="EnsemblPlants" id="AT5G20935.1">
    <property type="protein sequence ID" value="AT5G20935.1"/>
    <property type="gene ID" value="AT5G20935"/>
</dbReference>
<dbReference type="GeneID" id="832218"/>
<dbReference type="Gramene" id="AT5G20935.1">
    <property type="protein sequence ID" value="AT5G20935.1"/>
    <property type="gene ID" value="AT5G20935"/>
</dbReference>
<dbReference type="KEGG" id="ath:AT5G20935"/>
<dbReference type="Araport" id="AT5G20935"/>
<dbReference type="TAIR" id="AT5G20935">
    <property type="gene designation" value="CRR42"/>
</dbReference>
<dbReference type="eggNOG" id="KOG1151">
    <property type="taxonomic scope" value="Eukaryota"/>
</dbReference>
<dbReference type="HOGENOM" id="CLU_158887_2_0_1"/>
<dbReference type="InParanoid" id="F4K6X0"/>
<dbReference type="OMA" id="CLRANTG"/>
<dbReference type="PRO" id="PR:F4K6X0"/>
<dbReference type="Proteomes" id="UP000006548">
    <property type="component" value="Chromosome 5"/>
</dbReference>
<dbReference type="ExpressionAtlas" id="F4K6X0">
    <property type="expression patterns" value="baseline and differential"/>
</dbReference>
<dbReference type="GO" id="GO:0009570">
    <property type="term" value="C:chloroplast stroma"/>
    <property type="evidence" value="ECO:0000314"/>
    <property type="project" value="TAIR"/>
</dbReference>
<dbReference type="GO" id="GO:0009536">
    <property type="term" value="C:plastid"/>
    <property type="evidence" value="ECO:0007005"/>
    <property type="project" value="TAIR"/>
</dbReference>
<dbReference type="GO" id="GO:0010258">
    <property type="term" value="P:NADH dehydrogenase complex (plastoquinone) assembly"/>
    <property type="evidence" value="ECO:0000315"/>
    <property type="project" value="TAIR"/>
</dbReference>
<dbReference type="InterPro" id="IPR021495">
    <property type="entry name" value="CRR42-like"/>
</dbReference>
<dbReference type="PANTHER" id="PTHR36799">
    <property type="match status" value="1"/>
</dbReference>
<dbReference type="PANTHER" id="PTHR36799:SF2">
    <property type="entry name" value="PROTEIN CHLORORESPIRATORY REDUCTION 42, CHLOROPLASTIC"/>
    <property type="match status" value="1"/>
</dbReference>
<dbReference type="Pfam" id="PF11347">
    <property type="entry name" value="CRR42-like"/>
    <property type="match status" value="1"/>
</dbReference>
<gene>
    <name evidence="3" type="primary">CRR42</name>
    <name evidence="5" type="ordered locus">At5g20935</name>
    <name evidence="6" type="ORF">F22D1</name>
</gene>
<name>CHR42_ARATH</name>